<proteinExistence type="evidence at transcript level"/>
<dbReference type="EMBL" id="AJ291615">
    <property type="protein sequence ID" value="CAC14791.1"/>
    <property type="molecule type" value="mRNA"/>
</dbReference>
<dbReference type="SMR" id="Q9GRJ1"/>
<dbReference type="GO" id="GO:0016460">
    <property type="term" value="C:myosin II complex"/>
    <property type="evidence" value="ECO:0007669"/>
    <property type="project" value="TreeGrafter"/>
</dbReference>
<dbReference type="GO" id="GO:0005509">
    <property type="term" value="F:calcium ion binding"/>
    <property type="evidence" value="ECO:0007669"/>
    <property type="project" value="InterPro"/>
</dbReference>
<dbReference type="CDD" id="cd00051">
    <property type="entry name" value="EFh"/>
    <property type="match status" value="2"/>
</dbReference>
<dbReference type="FunFam" id="1.10.238.10:FF:000003">
    <property type="entry name" value="Calmodulin A"/>
    <property type="match status" value="1"/>
</dbReference>
<dbReference type="Gene3D" id="1.10.238.10">
    <property type="entry name" value="EF-hand"/>
    <property type="match status" value="3"/>
</dbReference>
<dbReference type="InterPro" id="IPR050230">
    <property type="entry name" value="CALM/Myosin/TropC-like"/>
</dbReference>
<dbReference type="InterPro" id="IPR011992">
    <property type="entry name" value="EF-hand-dom_pair"/>
</dbReference>
<dbReference type="InterPro" id="IPR018247">
    <property type="entry name" value="EF_Hand_1_Ca_BS"/>
</dbReference>
<dbReference type="InterPro" id="IPR002048">
    <property type="entry name" value="EF_hand_dom"/>
</dbReference>
<dbReference type="PANTHER" id="PTHR23048:SF0">
    <property type="entry name" value="CALMODULIN LIKE 3"/>
    <property type="match status" value="1"/>
</dbReference>
<dbReference type="PANTHER" id="PTHR23048">
    <property type="entry name" value="MYOSIN LIGHT CHAIN 1, 3"/>
    <property type="match status" value="1"/>
</dbReference>
<dbReference type="Pfam" id="PF13499">
    <property type="entry name" value="EF-hand_7"/>
    <property type="match status" value="2"/>
</dbReference>
<dbReference type="SMART" id="SM00054">
    <property type="entry name" value="EFh"/>
    <property type="match status" value="4"/>
</dbReference>
<dbReference type="SUPFAM" id="SSF47473">
    <property type="entry name" value="EF-hand"/>
    <property type="match status" value="1"/>
</dbReference>
<dbReference type="PROSITE" id="PS00018">
    <property type="entry name" value="EF_HAND_1"/>
    <property type="match status" value="4"/>
</dbReference>
<dbReference type="PROSITE" id="PS50222">
    <property type="entry name" value="EF_HAND_2"/>
    <property type="match status" value="4"/>
</dbReference>
<accession>Q9GRJ1</accession>
<name>CALM_LUMRU</name>
<reference key="1">
    <citation type="submission" date="2000-10" db="EMBL/GenBank/DDBJ databases">
        <title>Earthworm cDNAs.</title>
        <authorList>
            <person name="Sturzenbaum S.R."/>
            <person name="Manova A."/>
            <person name="Morgan A.J."/>
            <person name="Kille P."/>
            <person name="Schaffner W."/>
            <person name="Georgiev O."/>
        </authorList>
    </citation>
    <scope>NUCLEOTIDE SEQUENCE [MRNA]</scope>
</reference>
<keyword id="KW-0007">Acetylation</keyword>
<keyword id="KW-0106">Calcium</keyword>
<keyword id="KW-0479">Metal-binding</keyword>
<keyword id="KW-0488">Methylation</keyword>
<keyword id="KW-0677">Repeat</keyword>
<comment type="function">
    <text>Calmodulin mediates the control of a large number of enzymes, ion channels and other proteins by Ca(2+). Among the enzymes to be stimulated by the calmodulin-Ca(2+) complex are a number of protein kinases and phosphatases.</text>
</comment>
<comment type="miscellaneous">
    <text>This protein has four functional calcium-binding sites.</text>
</comment>
<comment type="similarity">
    <text evidence="3">Belongs to the calmodulin family.</text>
</comment>
<protein>
    <recommendedName>
        <fullName>Calmodulin</fullName>
        <shortName>CaM</shortName>
    </recommendedName>
</protein>
<sequence length="149" mass="16841">MADQLTEEQIAEFKEAFSLFDKDGDGTITTKELGTVMRSLGQNPTEAELQDMINEVDADGNGTIDFPEFLTMMARKMKDTDSEEEIREAFRVFDKDGNGFISAAELRHVMTNLGEKLTDEEVDEMIREADIDGDGQVNYEEFVTMMMSK</sequence>
<feature type="initiator methionine" description="Removed" evidence="1">
    <location>
        <position position="1"/>
    </location>
</feature>
<feature type="chain" id="PRO_0000198256" description="Calmodulin">
    <location>
        <begin position="2"/>
        <end position="149"/>
    </location>
</feature>
<feature type="domain" description="EF-hand 1" evidence="2">
    <location>
        <begin position="8"/>
        <end position="43"/>
    </location>
</feature>
<feature type="domain" description="EF-hand 2" evidence="2">
    <location>
        <begin position="44"/>
        <end position="79"/>
    </location>
</feature>
<feature type="domain" description="EF-hand 3" evidence="2">
    <location>
        <begin position="81"/>
        <end position="116"/>
    </location>
</feature>
<feature type="domain" description="EF-hand 4" evidence="2">
    <location>
        <begin position="117"/>
        <end position="149"/>
    </location>
</feature>
<feature type="binding site" evidence="2">
    <location>
        <position position="21"/>
    </location>
    <ligand>
        <name>Ca(2+)</name>
        <dbReference type="ChEBI" id="CHEBI:29108"/>
        <label>1</label>
    </ligand>
</feature>
<feature type="binding site" evidence="2">
    <location>
        <position position="23"/>
    </location>
    <ligand>
        <name>Ca(2+)</name>
        <dbReference type="ChEBI" id="CHEBI:29108"/>
        <label>1</label>
    </ligand>
</feature>
<feature type="binding site" evidence="2">
    <location>
        <position position="25"/>
    </location>
    <ligand>
        <name>Ca(2+)</name>
        <dbReference type="ChEBI" id="CHEBI:29108"/>
        <label>1</label>
    </ligand>
</feature>
<feature type="binding site" evidence="2">
    <location>
        <position position="27"/>
    </location>
    <ligand>
        <name>Ca(2+)</name>
        <dbReference type="ChEBI" id="CHEBI:29108"/>
        <label>1</label>
    </ligand>
</feature>
<feature type="binding site" evidence="2">
    <location>
        <position position="32"/>
    </location>
    <ligand>
        <name>Ca(2+)</name>
        <dbReference type="ChEBI" id="CHEBI:29108"/>
        <label>1</label>
    </ligand>
</feature>
<feature type="binding site" evidence="2">
    <location>
        <position position="57"/>
    </location>
    <ligand>
        <name>Ca(2+)</name>
        <dbReference type="ChEBI" id="CHEBI:29108"/>
        <label>2</label>
    </ligand>
</feature>
<feature type="binding site" evidence="2">
    <location>
        <position position="59"/>
    </location>
    <ligand>
        <name>Ca(2+)</name>
        <dbReference type="ChEBI" id="CHEBI:29108"/>
        <label>2</label>
    </ligand>
</feature>
<feature type="binding site" evidence="2">
    <location>
        <position position="61"/>
    </location>
    <ligand>
        <name>Ca(2+)</name>
        <dbReference type="ChEBI" id="CHEBI:29108"/>
        <label>2</label>
    </ligand>
</feature>
<feature type="binding site" evidence="2">
    <location>
        <position position="63"/>
    </location>
    <ligand>
        <name>Ca(2+)</name>
        <dbReference type="ChEBI" id="CHEBI:29108"/>
        <label>2</label>
    </ligand>
</feature>
<feature type="binding site" evidence="2">
    <location>
        <position position="68"/>
    </location>
    <ligand>
        <name>Ca(2+)</name>
        <dbReference type="ChEBI" id="CHEBI:29108"/>
        <label>2</label>
    </ligand>
</feature>
<feature type="binding site" evidence="2">
    <location>
        <position position="94"/>
    </location>
    <ligand>
        <name>Ca(2+)</name>
        <dbReference type="ChEBI" id="CHEBI:29108"/>
        <label>3</label>
    </ligand>
</feature>
<feature type="binding site" evidence="2">
    <location>
        <position position="96"/>
    </location>
    <ligand>
        <name>Ca(2+)</name>
        <dbReference type="ChEBI" id="CHEBI:29108"/>
        <label>3</label>
    </ligand>
</feature>
<feature type="binding site" evidence="2">
    <location>
        <position position="98"/>
    </location>
    <ligand>
        <name>Ca(2+)</name>
        <dbReference type="ChEBI" id="CHEBI:29108"/>
        <label>3</label>
    </ligand>
</feature>
<feature type="binding site" evidence="2">
    <location>
        <position position="105"/>
    </location>
    <ligand>
        <name>Ca(2+)</name>
        <dbReference type="ChEBI" id="CHEBI:29108"/>
        <label>3</label>
    </ligand>
</feature>
<feature type="binding site" evidence="2">
    <location>
        <position position="130"/>
    </location>
    <ligand>
        <name>Ca(2+)</name>
        <dbReference type="ChEBI" id="CHEBI:29108"/>
        <label>4</label>
    </ligand>
</feature>
<feature type="binding site" evidence="2">
    <location>
        <position position="132"/>
    </location>
    <ligand>
        <name>Ca(2+)</name>
        <dbReference type="ChEBI" id="CHEBI:29108"/>
        <label>4</label>
    </ligand>
</feature>
<feature type="binding site" evidence="2">
    <location>
        <position position="134"/>
    </location>
    <ligand>
        <name>Ca(2+)</name>
        <dbReference type="ChEBI" id="CHEBI:29108"/>
        <label>4</label>
    </ligand>
</feature>
<feature type="binding site" evidence="2">
    <location>
        <position position="136"/>
    </location>
    <ligand>
        <name>Ca(2+)</name>
        <dbReference type="ChEBI" id="CHEBI:29108"/>
        <label>4</label>
    </ligand>
</feature>
<feature type="binding site" evidence="2">
    <location>
        <position position="141"/>
    </location>
    <ligand>
        <name>Ca(2+)</name>
        <dbReference type="ChEBI" id="CHEBI:29108"/>
        <label>4</label>
    </ligand>
</feature>
<feature type="modified residue" description="N-acetylalanine" evidence="1">
    <location>
        <position position="2"/>
    </location>
</feature>
<feature type="modified residue" description="N6,N6,N6-trimethyllysine" evidence="1">
    <location>
        <position position="116"/>
    </location>
</feature>
<evidence type="ECO:0000250" key="1"/>
<evidence type="ECO:0000255" key="2">
    <source>
        <dbReference type="PROSITE-ProRule" id="PRU00448"/>
    </source>
</evidence>
<evidence type="ECO:0000305" key="3"/>
<organism>
    <name type="scientific">Lumbricus rubellus</name>
    <name type="common">Humus earthworm</name>
    <dbReference type="NCBI Taxonomy" id="35632"/>
    <lineage>
        <taxon>Eukaryota</taxon>
        <taxon>Metazoa</taxon>
        <taxon>Spiralia</taxon>
        <taxon>Lophotrochozoa</taxon>
        <taxon>Annelida</taxon>
        <taxon>Clitellata</taxon>
        <taxon>Oligochaeta</taxon>
        <taxon>Crassiclitellata</taxon>
        <taxon>Lumbricina</taxon>
        <taxon>Lumbricidae</taxon>
        <taxon>Lumbricinae</taxon>
        <taxon>Lumbricus</taxon>
    </lineage>
</organism>